<reference key="1">
    <citation type="submission" date="2008-10" db="EMBL/GenBank/DDBJ databases">
        <title>Genome sequence of Bacillus anthracis str. CDC 684.</title>
        <authorList>
            <person name="Dodson R.J."/>
            <person name="Munk A.C."/>
            <person name="Brettin T."/>
            <person name="Bruce D."/>
            <person name="Detter C."/>
            <person name="Tapia R."/>
            <person name="Han C."/>
            <person name="Sutton G."/>
            <person name="Sims D."/>
        </authorList>
    </citation>
    <scope>NUCLEOTIDE SEQUENCE [LARGE SCALE GENOMIC DNA]</scope>
    <source>
        <strain>CDC 684 / NRRL 3495</strain>
    </source>
</reference>
<organism>
    <name type="scientific">Bacillus anthracis (strain CDC 684 / NRRL 3495)</name>
    <dbReference type="NCBI Taxonomy" id="568206"/>
    <lineage>
        <taxon>Bacteria</taxon>
        <taxon>Bacillati</taxon>
        <taxon>Bacillota</taxon>
        <taxon>Bacilli</taxon>
        <taxon>Bacillales</taxon>
        <taxon>Bacillaceae</taxon>
        <taxon>Bacillus</taxon>
        <taxon>Bacillus cereus group</taxon>
    </lineage>
</organism>
<keyword id="KW-1003">Cell membrane</keyword>
<keyword id="KW-0406">Ion transport</keyword>
<keyword id="KW-0472">Membrane</keyword>
<keyword id="KW-0630">Potassium</keyword>
<keyword id="KW-0633">Potassium transport</keyword>
<keyword id="KW-0812">Transmembrane</keyword>
<keyword id="KW-1133">Transmembrane helix</keyword>
<keyword id="KW-0813">Transport</keyword>
<dbReference type="EMBL" id="CP001215">
    <property type="protein sequence ID" value="ACP13982.1"/>
    <property type="molecule type" value="Genomic_DNA"/>
</dbReference>
<dbReference type="RefSeq" id="WP_000638344.1">
    <property type="nucleotide sequence ID" value="NC_012581.1"/>
</dbReference>
<dbReference type="SMR" id="C3LFA0"/>
<dbReference type="GeneID" id="45020818"/>
<dbReference type="KEGG" id="bah:BAMEG_3819"/>
<dbReference type="HOGENOM" id="CLU_018614_3_0_9"/>
<dbReference type="GO" id="GO:0005886">
    <property type="term" value="C:plasma membrane"/>
    <property type="evidence" value="ECO:0007669"/>
    <property type="project" value="UniProtKB-SubCell"/>
</dbReference>
<dbReference type="GO" id="GO:0008556">
    <property type="term" value="F:P-type potassium transmembrane transporter activity"/>
    <property type="evidence" value="ECO:0007669"/>
    <property type="project" value="InterPro"/>
</dbReference>
<dbReference type="GO" id="GO:0030955">
    <property type="term" value="F:potassium ion binding"/>
    <property type="evidence" value="ECO:0007669"/>
    <property type="project" value="UniProtKB-UniRule"/>
</dbReference>
<dbReference type="HAMAP" id="MF_00275">
    <property type="entry name" value="KdpA"/>
    <property type="match status" value="1"/>
</dbReference>
<dbReference type="InterPro" id="IPR004623">
    <property type="entry name" value="KdpA"/>
</dbReference>
<dbReference type="NCBIfam" id="TIGR00680">
    <property type="entry name" value="kdpA"/>
    <property type="match status" value="1"/>
</dbReference>
<dbReference type="PANTHER" id="PTHR30607">
    <property type="entry name" value="POTASSIUM-TRANSPORTING ATPASE A CHAIN"/>
    <property type="match status" value="1"/>
</dbReference>
<dbReference type="PANTHER" id="PTHR30607:SF2">
    <property type="entry name" value="POTASSIUM-TRANSPORTING ATPASE POTASSIUM-BINDING SUBUNIT"/>
    <property type="match status" value="1"/>
</dbReference>
<dbReference type="Pfam" id="PF03814">
    <property type="entry name" value="KdpA"/>
    <property type="match status" value="1"/>
</dbReference>
<dbReference type="PIRSF" id="PIRSF001294">
    <property type="entry name" value="K_ATPaseA"/>
    <property type="match status" value="1"/>
</dbReference>
<accession>C3LFA0</accession>
<sequence length="555" mass="59761">MIWVAVVITMLLFILVAKPTGIYLEKAFQGSKKLDKVFGPFEKLIFKITGVKEYNQTWKQYALSLVLLNGFMIVVVYFIFRLQGVLPLNPAHIEGMEPTLAFNTAISFMADTNLQHYSGENGLSYLSQLIGITFLMFAAPATTLALVMAFIRGLAGKELGNFFIDFTRALTRVFLPIAFMAALVFVALGVPQTLDGAVTAQTIDGAKQSILRGPVASFVAIKELGNNGGGFFGANSTHPFENPGQMSNILQMMLMMLLPTALPFTYGRMVGNKKQGRILFVSLFMVFLLGFITITTSELNGNPALNAMGIEHVQGSTEGKEVRFGTVFSSLYATVTTAAETGAVNTMHDTLTPIGGLVPLVNMMLNTVYGGVGAGFVNIIMYAIIAVFISGLMVGRTPEFLGKKIEGKEMKLIAVTILFHPLLILGFSALALSTSLGTDAISHSGFHGLTQVVYEYTSSAANNGSGFEGLGDNTPFWNITTGLVMFLGRYFSLITMLAVAASLKEKTVVPETVGTFRTDNGLFGGIFIGTIVIVGALTFFPMLVLGPIAEFLTLK</sequence>
<name>KDPA_BACAC</name>
<evidence type="ECO:0000255" key="1">
    <source>
        <dbReference type="HAMAP-Rule" id="MF_00275"/>
    </source>
</evidence>
<proteinExistence type="inferred from homology"/>
<comment type="function">
    <text evidence="1">Part of the high-affinity ATP-driven potassium transport (or Kdp) system, which catalyzes the hydrolysis of ATP coupled with the electrogenic transport of potassium into the cytoplasm. This subunit binds the extracellular potassium ions and delivers the ions to the membrane domain of KdpB through an intramembrane tunnel.</text>
</comment>
<comment type="subunit">
    <text evidence="1">The system is composed of three essential subunits: KdpA, KdpB and KdpC.</text>
</comment>
<comment type="subcellular location">
    <subcellularLocation>
        <location evidence="1">Cell membrane</location>
        <topology evidence="1">Multi-pass membrane protein</topology>
    </subcellularLocation>
</comment>
<comment type="similarity">
    <text evidence="1">Belongs to the KdpA family.</text>
</comment>
<feature type="chain" id="PRO_1000190730" description="Potassium-transporting ATPase potassium-binding subunit">
    <location>
        <begin position="1"/>
        <end position="555"/>
    </location>
</feature>
<feature type="transmembrane region" description="Helical" evidence="1">
    <location>
        <begin position="2"/>
        <end position="22"/>
    </location>
</feature>
<feature type="transmembrane region" description="Helical" evidence="1">
    <location>
        <begin position="60"/>
        <end position="80"/>
    </location>
</feature>
<feature type="transmembrane region" description="Helical" evidence="1">
    <location>
        <begin position="130"/>
        <end position="150"/>
    </location>
</feature>
<feature type="transmembrane region" description="Helical" evidence="1">
    <location>
        <begin position="173"/>
        <end position="193"/>
    </location>
</feature>
<feature type="transmembrane region" description="Helical" evidence="1">
    <location>
        <begin position="246"/>
        <end position="266"/>
    </location>
</feature>
<feature type="transmembrane region" description="Helical" evidence="1">
    <location>
        <begin position="278"/>
        <end position="298"/>
    </location>
</feature>
<feature type="transmembrane region" description="Helical" evidence="1">
    <location>
        <begin position="374"/>
        <end position="394"/>
    </location>
</feature>
<feature type="transmembrane region" description="Helical" evidence="1">
    <location>
        <begin position="412"/>
        <end position="432"/>
    </location>
</feature>
<feature type="transmembrane region" description="Helical" evidence="1">
    <location>
        <begin position="483"/>
        <end position="503"/>
    </location>
</feature>
<feature type="transmembrane region" description="Helical" evidence="1">
    <location>
        <begin position="525"/>
        <end position="545"/>
    </location>
</feature>
<gene>
    <name evidence="1" type="primary">kdpA</name>
    <name type="ordered locus">BAMEG_3819</name>
</gene>
<protein>
    <recommendedName>
        <fullName evidence="1">Potassium-transporting ATPase potassium-binding subunit</fullName>
    </recommendedName>
    <alternativeName>
        <fullName evidence="1">ATP phosphohydrolase [potassium-transporting] A chain</fullName>
    </alternativeName>
    <alternativeName>
        <fullName evidence="1">Potassium-binding and translocating subunit A</fullName>
    </alternativeName>
    <alternativeName>
        <fullName evidence="1">Potassium-translocating ATPase A chain</fullName>
    </alternativeName>
</protein>